<sequence length="114" mass="12123">MASSMLGFLLLLLLLMAAHPGPSEAQHWSHGWYPGGKRASNSPQDPQSALRPPAPSAAQTAHSFRSAALASPEDSVPWEGRTTAGWSLRRKQHLMRTLLSAAGAPRPAAVPIKP</sequence>
<gene>
    <name type="primary">GNRH2</name>
</gene>
<name>GON2_TUPBE</name>
<protein>
    <recommendedName>
        <fullName>Progonadoliberin-2</fullName>
    </recommendedName>
    <alternativeName>
        <fullName>Progonadoliberin II</fullName>
    </alternativeName>
    <component>
        <recommendedName>
            <fullName>Gonadoliberin-2</fullName>
        </recommendedName>
        <alternativeName>
            <fullName>Gonadoliberin II</fullName>
        </alternativeName>
        <alternativeName>
            <fullName>Gonadotropin-releasing hormone II</fullName>
            <shortName>GnRH II</shortName>
        </alternativeName>
        <alternativeName>
            <fullName>Luliberin II</fullName>
        </alternativeName>
        <alternativeName>
            <fullName>Luteinizing hormone-releasing hormone II</fullName>
            <shortName>LH-RH II</shortName>
        </alternativeName>
    </component>
    <component>
        <recommendedName>
            <fullName>GnRH-associated peptide 2</fullName>
        </recommendedName>
        <alternativeName>
            <fullName>GnRH-associated peptide II</fullName>
        </alternativeName>
    </component>
</protein>
<dbReference type="EMBL" id="U63327">
    <property type="protein sequence ID" value="AAB16838.1"/>
    <property type="molecule type" value="mRNA"/>
</dbReference>
<dbReference type="GO" id="GO:0005615">
    <property type="term" value="C:extracellular space"/>
    <property type="evidence" value="ECO:0000250"/>
    <property type="project" value="UniProtKB"/>
</dbReference>
<dbReference type="GO" id="GO:0005183">
    <property type="term" value="F:gonadotropin hormone-releasing hormone activity"/>
    <property type="evidence" value="ECO:0007669"/>
    <property type="project" value="TreeGrafter"/>
</dbReference>
<dbReference type="GO" id="GO:0031530">
    <property type="term" value="F:gonadotropin-releasing hormone receptor binding"/>
    <property type="evidence" value="ECO:0007669"/>
    <property type="project" value="TreeGrafter"/>
</dbReference>
<dbReference type="InterPro" id="IPR002012">
    <property type="entry name" value="GnRH"/>
</dbReference>
<dbReference type="InterPro" id="IPR019792">
    <property type="entry name" value="Gonadoliberin"/>
</dbReference>
<dbReference type="PANTHER" id="PTHR10522">
    <property type="entry name" value="GONADOLIBERIN"/>
    <property type="match status" value="1"/>
</dbReference>
<dbReference type="PANTHER" id="PTHR10522:SF6">
    <property type="entry name" value="PROGONADOLIBERIN-2"/>
    <property type="match status" value="1"/>
</dbReference>
<dbReference type="Pfam" id="PF00446">
    <property type="entry name" value="GnRH"/>
    <property type="match status" value="1"/>
</dbReference>
<dbReference type="PROSITE" id="PS00473">
    <property type="entry name" value="GNRH"/>
    <property type="match status" value="1"/>
</dbReference>
<organism>
    <name type="scientific">Tupaia belangeri</name>
    <name type="common">Common tree shrew</name>
    <name type="synonym">Tupaia glis belangeri</name>
    <dbReference type="NCBI Taxonomy" id="37347"/>
    <lineage>
        <taxon>Eukaryota</taxon>
        <taxon>Metazoa</taxon>
        <taxon>Chordata</taxon>
        <taxon>Craniata</taxon>
        <taxon>Vertebrata</taxon>
        <taxon>Euteleostomi</taxon>
        <taxon>Mammalia</taxon>
        <taxon>Eutheria</taxon>
        <taxon>Euarchontoglires</taxon>
        <taxon>Scandentia</taxon>
        <taxon>Tupaiidae</taxon>
        <taxon>Tupaia</taxon>
    </lineage>
</organism>
<feature type="signal peptide" evidence="1">
    <location>
        <begin position="1"/>
        <end position="25"/>
    </location>
</feature>
<feature type="chain" id="PRO_0000012465" description="Progonadoliberin-2">
    <location>
        <begin position="26"/>
        <end position="114"/>
    </location>
</feature>
<feature type="peptide" id="PRO_0000012466" description="Gonadoliberin-2">
    <location>
        <begin position="26"/>
        <end position="35"/>
    </location>
</feature>
<feature type="peptide" id="PRO_0000012467" description="GnRH-associated peptide 2">
    <location>
        <begin position="39"/>
        <end position="114"/>
    </location>
</feature>
<feature type="region of interest" description="Disordered" evidence="3">
    <location>
        <begin position="22"/>
        <end position="80"/>
    </location>
</feature>
<feature type="modified residue" description="Glycine amide" evidence="2">
    <location>
        <position position="35"/>
    </location>
</feature>
<accession>Q95336</accession>
<evidence type="ECO:0000250" key="1"/>
<evidence type="ECO:0000250" key="2">
    <source>
        <dbReference type="UniProtKB" id="P01148"/>
    </source>
</evidence>
<evidence type="ECO:0000256" key="3">
    <source>
        <dbReference type="SAM" id="MobiDB-lite"/>
    </source>
</evidence>
<evidence type="ECO:0000305" key="4"/>
<keyword id="KW-0027">Amidation</keyword>
<keyword id="KW-0165">Cleavage on pair of basic residues</keyword>
<keyword id="KW-0372">Hormone</keyword>
<keyword id="KW-0964">Secreted</keyword>
<keyword id="KW-0732">Signal</keyword>
<reference key="1">
    <citation type="journal article" date="1996" name="Gen. Comp. Endocrinol.">
        <title>Characterization of two new preproGnRH mRNAs in the tree shrew: first direct evidence for mesencephalic GnRH gene expression in a placental mammal.</title>
        <authorList>
            <person name="Kasten T.L."/>
            <person name="White S.A."/>
            <person name="Norton T.T."/>
            <person name="Bond C.T."/>
            <person name="Adelman J.P."/>
            <person name="Fernald R.D."/>
        </authorList>
    </citation>
    <scope>NUCLEOTIDE SEQUENCE [MRNA]</scope>
    <source>
        <tissue>Hypothalamus</tissue>
    </source>
</reference>
<comment type="function">
    <text>Stimulates the secretion of gonadotropins; it stimulates the secretion of both luteinizing and follicle-stimulating hormones.</text>
</comment>
<comment type="subcellular location">
    <subcellularLocation>
        <location>Secreted</location>
    </subcellularLocation>
</comment>
<comment type="tissue specificity">
    <text>Midbrain.</text>
</comment>
<comment type="similarity">
    <text evidence="4">Belongs to the GnRH family.</text>
</comment>
<proteinExistence type="evidence at transcript level"/>